<sequence length="609" mass="71822">MVKRNHKYQSGEGAQYMTRKAAMRKLQLSMQDFRRLCILKGIYPREPKHRVIAQRGSTDIKILYHRKDITFLLHEPIVWTLRDRKIFNRRIAHARAKGNNLLKNVRMANYPEIKLDHIIKERFPTFIDAIKELDDCMTLLFLFSTFPAMKVVTREITSLARRLTIEFMHYVIAAKALRKVFVSIKGYYFQAEIKGELVTWIVPHYYPFQPQRKEYVDFKIMKSFADFFTVMAGFVNYRLYNSINMVYPPQFSVSIDSDESRNNEETFVSERIAALNMDLLRSDRQGTEEEDEEIDLKLLDNDKDSEQVRKMHEEALSLSKLKNLFKGLKFFINREVPREPLVFIIRCFGGKVSWDKHLFVGSTFDETDESITHQIVDRPSLTKQYISRDYVQPQWIFDSVNQRKLLPTNKYFIGAVLPPHLSPFNRDDAIYVPPEEAAMQAGDEFEKQERAEGISDDEDEDFGMEEARKQVQLDYALVKAFREEKAEALNSGEAKKEQAEEDNEDDDQEPDQDETKKQRSEKKQKMAVVSGRVFKENPKEQKQLTKQEEALRAKMVKSRHKKLYRNLLDKQKKATKEANLLREKRQQIDKQKRKEQTQKRKAQRKEILA</sequence>
<feature type="chain" id="PRO_0000370449" description="Pescadillo homolog">
    <location>
        <begin position="1"/>
        <end position="609"/>
    </location>
</feature>
<feature type="domain" description="BRCT" evidence="1">
    <location>
        <begin position="320"/>
        <end position="413"/>
    </location>
</feature>
<feature type="region of interest" description="Disordered" evidence="2">
    <location>
        <begin position="443"/>
        <end position="462"/>
    </location>
</feature>
<feature type="region of interest" description="Disordered" evidence="2">
    <location>
        <begin position="488"/>
        <end position="609"/>
    </location>
</feature>
<feature type="coiled-coil region" evidence="1">
    <location>
        <begin position="481"/>
        <end position="509"/>
    </location>
</feature>
<feature type="coiled-coil region" evidence="1">
    <location>
        <begin position="539"/>
        <end position="607"/>
    </location>
</feature>
<feature type="compositionally biased region" description="Basic and acidic residues" evidence="2">
    <location>
        <begin position="444"/>
        <end position="453"/>
    </location>
</feature>
<feature type="compositionally biased region" description="Basic and acidic residues" evidence="2">
    <location>
        <begin position="488"/>
        <end position="498"/>
    </location>
</feature>
<feature type="compositionally biased region" description="Acidic residues" evidence="2">
    <location>
        <begin position="499"/>
        <end position="512"/>
    </location>
</feature>
<feature type="compositionally biased region" description="Basic and acidic residues" evidence="2">
    <location>
        <begin position="513"/>
        <end position="524"/>
    </location>
</feature>
<feature type="compositionally biased region" description="Basic and acidic residues" evidence="2">
    <location>
        <begin position="533"/>
        <end position="552"/>
    </location>
</feature>
<feature type="compositionally biased region" description="Basic residues" evidence="2">
    <location>
        <begin position="554"/>
        <end position="564"/>
    </location>
</feature>
<feature type="compositionally biased region" description="Basic and acidic residues" evidence="2">
    <location>
        <begin position="567"/>
        <end position="609"/>
    </location>
</feature>
<gene>
    <name type="ORF">AAEL012980</name>
</gene>
<protein>
    <recommendedName>
        <fullName evidence="1">Pescadillo homolog</fullName>
    </recommendedName>
</protein>
<dbReference type="EMBL" id="CH477955">
    <property type="protein sequence ID" value="EAT34815.1"/>
    <property type="molecule type" value="Genomic_DNA"/>
</dbReference>
<dbReference type="RefSeq" id="XP_001656318.1">
    <property type="nucleotide sequence ID" value="XM_001656268.1"/>
</dbReference>
<dbReference type="SMR" id="Q0IE95"/>
<dbReference type="FunCoup" id="Q0IE95">
    <property type="interactions" value="2206"/>
</dbReference>
<dbReference type="STRING" id="7159.Q0IE95"/>
<dbReference type="PaxDb" id="7159-AAEL012980-PA"/>
<dbReference type="GeneID" id="5577080"/>
<dbReference type="KEGG" id="aag:5577080"/>
<dbReference type="VEuPathDB" id="VectorBase:AAEL012980"/>
<dbReference type="eggNOG" id="KOG2481">
    <property type="taxonomic scope" value="Eukaryota"/>
</dbReference>
<dbReference type="HOGENOM" id="CLU_019619_0_0_1"/>
<dbReference type="InParanoid" id="Q0IE95"/>
<dbReference type="OMA" id="QKVTWIV"/>
<dbReference type="OrthoDB" id="10264910at2759"/>
<dbReference type="PhylomeDB" id="Q0IE95"/>
<dbReference type="Proteomes" id="UP000008820">
    <property type="component" value="Unassembled WGS sequence"/>
</dbReference>
<dbReference type="Proteomes" id="UP000682892">
    <property type="component" value="Unassembled WGS sequence"/>
</dbReference>
<dbReference type="GO" id="GO:0005654">
    <property type="term" value="C:nucleoplasm"/>
    <property type="evidence" value="ECO:0007669"/>
    <property type="project" value="UniProtKB-SubCell"/>
</dbReference>
<dbReference type="GO" id="GO:0070545">
    <property type="term" value="C:PeBoW complex"/>
    <property type="evidence" value="ECO:0007669"/>
    <property type="project" value="TreeGrafter"/>
</dbReference>
<dbReference type="GO" id="GO:0030687">
    <property type="term" value="C:preribosome, large subunit precursor"/>
    <property type="evidence" value="ECO:0007669"/>
    <property type="project" value="UniProtKB-UniRule"/>
</dbReference>
<dbReference type="GO" id="GO:0043021">
    <property type="term" value="F:ribonucleoprotein complex binding"/>
    <property type="evidence" value="ECO:0007669"/>
    <property type="project" value="UniProtKB-UniRule"/>
</dbReference>
<dbReference type="GO" id="GO:0003723">
    <property type="term" value="F:RNA binding"/>
    <property type="evidence" value="ECO:0007669"/>
    <property type="project" value="TreeGrafter"/>
</dbReference>
<dbReference type="GO" id="GO:0000466">
    <property type="term" value="P:maturation of 5.8S rRNA from tricistronic rRNA transcript (SSU-rRNA, 5.8S rRNA, LSU-rRNA)"/>
    <property type="evidence" value="ECO:0007669"/>
    <property type="project" value="UniProtKB-UniRule"/>
</dbReference>
<dbReference type="GO" id="GO:0000463">
    <property type="term" value="P:maturation of LSU-rRNA from tricistronic rRNA transcript (SSU-rRNA, 5.8S rRNA, LSU-rRNA)"/>
    <property type="evidence" value="ECO:0007669"/>
    <property type="project" value="UniProtKB-UniRule"/>
</dbReference>
<dbReference type="CDD" id="cd17709">
    <property type="entry name" value="BRCT_pescadillo_like"/>
    <property type="match status" value="1"/>
</dbReference>
<dbReference type="FunFam" id="3.40.50.10190:FF:000002">
    <property type="entry name" value="Pescadillo homolog"/>
    <property type="match status" value="1"/>
</dbReference>
<dbReference type="Gene3D" id="3.40.50.10190">
    <property type="entry name" value="BRCT domain"/>
    <property type="match status" value="1"/>
</dbReference>
<dbReference type="HAMAP" id="MF_03028">
    <property type="entry name" value="Pescadillo"/>
    <property type="match status" value="1"/>
</dbReference>
<dbReference type="InterPro" id="IPR001357">
    <property type="entry name" value="BRCT_dom"/>
</dbReference>
<dbReference type="InterPro" id="IPR036420">
    <property type="entry name" value="BRCT_dom_sf"/>
</dbReference>
<dbReference type="InterPro" id="IPR010613">
    <property type="entry name" value="PES"/>
</dbReference>
<dbReference type="PANTHER" id="PTHR12221">
    <property type="entry name" value="PESCADILLO - RELATED"/>
    <property type="match status" value="1"/>
</dbReference>
<dbReference type="PANTHER" id="PTHR12221:SF6">
    <property type="entry name" value="PESCADILLO HOMOLOG"/>
    <property type="match status" value="1"/>
</dbReference>
<dbReference type="Pfam" id="PF16589">
    <property type="entry name" value="BRCT_2"/>
    <property type="match status" value="1"/>
</dbReference>
<dbReference type="Pfam" id="PF06732">
    <property type="entry name" value="Pescadillo_N"/>
    <property type="match status" value="1"/>
</dbReference>
<dbReference type="SMART" id="SM00292">
    <property type="entry name" value="BRCT"/>
    <property type="match status" value="1"/>
</dbReference>
<dbReference type="SUPFAM" id="SSF52113">
    <property type="entry name" value="BRCT domain"/>
    <property type="match status" value="1"/>
</dbReference>
<dbReference type="PROSITE" id="PS50172">
    <property type="entry name" value="BRCT"/>
    <property type="match status" value="1"/>
</dbReference>
<keyword id="KW-0175">Coiled coil</keyword>
<keyword id="KW-0539">Nucleus</keyword>
<keyword id="KW-1185">Reference proteome</keyword>
<keyword id="KW-0690">Ribosome biogenesis</keyword>
<keyword id="KW-0698">rRNA processing</keyword>
<comment type="function">
    <text evidence="1">Required for maturation of ribosomal RNAs and formation of the large ribosomal subunit.</text>
</comment>
<comment type="subcellular location">
    <subcellularLocation>
        <location evidence="1">Nucleus</location>
        <location evidence="1">Nucleolus</location>
    </subcellularLocation>
    <subcellularLocation>
        <location evidence="1">Nucleus</location>
        <location evidence="1">Nucleoplasm</location>
    </subcellularLocation>
</comment>
<comment type="similarity">
    <text evidence="1">Belongs to the pescadillo family.</text>
</comment>
<proteinExistence type="inferred from homology"/>
<accession>Q0IE95</accession>
<organism>
    <name type="scientific">Aedes aegypti</name>
    <name type="common">Yellowfever mosquito</name>
    <name type="synonym">Culex aegypti</name>
    <dbReference type="NCBI Taxonomy" id="7159"/>
    <lineage>
        <taxon>Eukaryota</taxon>
        <taxon>Metazoa</taxon>
        <taxon>Ecdysozoa</taxon>
        <taxon>Arthropoda</taxon>
        <taxon>Hexapoda</taxon>
        <taxon>Insecta</taxon>
        <taxon>Pterygota</taxon>
        <taxon>Neoptera</taxon>
        <taxon>Endopterygota</taxon>
        <taxon>Diptera</taxon>
        <taxon>Nematocera</taxon>
        <taxon>Culicoidea</taxon>
        <taxon>Culicidae</taxon>
        <taxon>Culicinae</taxon>
        <taxon>Aedini</taxon>
        <taxon>Aedes</taxon>
        <taxon>Stegomyia</taxon>
    </lineage>
</organism>
<evidence type="ECO:0000255" key="1">
    <source>
        <dbReference type="HAMAP-Rule" id="MF_03028"/>
    </source>
</evidence>
<evidence type="ECO:0000256" key="2">
    <source>
        <dbReference type="SAM" id="MobiDB-lite"/>
    </source>
</evidence>
<name>PESC_AEDAE</name>
<reference key="1">
    <citation type="journal article" date="2007" name="Science">
        <title>Genome sequence of Aedes aegypti, a major arbovirus vector.</title>
        <authorList>
            <person name="Nene V."/>
            <person name="Wortman J.R."/>
            <person name="Lawson D."/>
            <person name="Haas B.J."/>
            <person name="Kodira C.D."/>
            <person name="Tu Z.J."/>
            <person name="Loftus B.J."/>
            <person name="Xi Z."/>
            <person name="Megy K."/>
            <person name="Grabherr M."/>
            <person name="Ren Q."/>
            <person name="Zdobnov E.M."/>
            <person name="Lobo N.F."/>
            <person name="Campbell K.S."/>
            <person name="Brown S.E."/>
            <person name="Bonaldo M.F."/>
            <person name="Zhu J."/>
            <person name="Sinkins S.P."/>
            <person name="Hogenkamp D.G."/>
            <person name="Amedeo P."/>
            <person name="Arensburger P."/>
            <person name="Atkinson P.W."/>
            <person name="Bidwell S.L."/>
            <person name="Biedler J."/>
            <person name="Birney E."/>
            <person name="Bruggner R.V."/>
            <person name="Costas J."/>
            <person name="Coy M.R."/>
            <person name="Crabtree J."/>
            <person name="Crawford M."/>
            <person name="DeBruyn B."/>
            <person name="DeCaprio D."/>
            <person name="Eiglmeier K."/>
            <person name="Eisenstadt E."/>
            <person name="El-Dorry H."/>
            <person name="Gelbart W.M."/>
            <person name="Gomes S.L."/>
            <person name="Hammond M."/>
            <person name="Hannick L.I."/>
            <person name="Hogan J.R."/>
            <person name="Holmes M.H."/>
            <person name="Jaffe D."/>
            <person name="Johnston S.J."/>
            <person name="Kennedy R.C."/>
            <person name="Koo H."/>
            <person name="Kravitz S."/>
            <person name="Kriventseva E.V."/>
            <person name="Kulp D."/>
            <person name="Labutti K."/>
            <person name="Lee E."/>
            <person name="Li S."/>
            <person name="Lovin D.D."/>
            <person name="Mao C."/>
            <person name="Mauceli E."/>
            <person name="Menck C.F."/>
            <person name="Miller J.R."/>
            <person name="Montgomery P."/>
            <person name="Mori A."/>
            <person name="Nascimento A.L."/>
            <person name="Naveira H.F."/>
            <person name="Nusbaum C."/>
            <person name="O'Leary S.B."/>
            <person name="Orvis J."/>
            <person name="Pertea M."/>
            <person name="Quesneville H."/>
            <person name="Reidenbach K.R."/>
            <person name="Rogers Y.-H.C."/>
            <person name="Roth C.W."/>
            <person name="Schneider J.R."/>
            <person name="Schatz M."/>
            <person name="Shumway M."/>
            <person name="Stanke M."/>
            <person name="Stinson E.O."/>
            <person name="Tubio J.M.C."/>
            <person name="Vanzee J.P."/>
            <person name="Verjovski-Almeida S."/>
            <person name="Werner D."/>
            <person name="White O.R."/>
            <person name="Wyder S."/>
            <person name="Zeng Q."/>
            <person name="Zhao Q."/>
            <person name="Zhao Y."/>
            <person name="Hill C.A."/>
            <person name="Raikhel A.S."/>
            <person name="Soares M.B."/>
            <person name="Knudson D.L."/>
            <person name="Lee N.H."/>
            <person name="Galagan J."/>
            <person name="Salzberg S.L."/>
            <person name="Paulsen I.T."/>
            <person name="Dimopoulos G."/>
            <person name="Collins F.H."/>
            <person name="Bruce B."/>
            <person name="Fraser-Liggett C.M."/>
            <person name="Severson D.W."/>
        </authorList>
    </citation>
    <scope>NUCLEOTIDE SEQUENCE [LARGE SCALE GENOMIC DNA]</scope>
    <source>
        <strain>LVPib12</strain>
    </source>
</reference>